<evidence type="ECO:0000255" key="1">
    <source>
        <dbReference type="HAMAP-Rule" id="MF_00201"/>
    </source>
</evidence>
<feature type="chain" id="PRO_1000193369" description="DNA repair protein RecO">
    <location>
        <begin position="1"/>
        <end position="293"/>
    </location>
</feature>
<comment type="function">
    <text evidence="1">Involved in DNA repair and RecF pathway recombination.</text>
</comment>
<comment type="similarity">
    <text evidence="1">Belongs to the RecO family.</text>
</comment>
<gene>
    <name evidence="1" type="primary">recO</name>
    <name type="ordered locus">Cyan7425_0978</name>
</gene>
<keyword id="KW-0227">DNA damage</keyword>
<keyword id="KW-0233">DNA recombination</keyword>
<keyword id="KW-0234">DNA repair</keyword>
<protein>
    <recommendedName>
        <fullName evidence="1">DNA repair protein RecO</fullName>
    </recommendedName>
    <alternativeName>
        <fullName evidence="1">Recombination protein O</fullName>
    </alternativeName>
</protein>
<dbReference type="EMBL" id="CP001344">
    <property type="protein sequence ID" value="ACL43364.1"/>
    <property type="molecule type" value="Genomic_DNA"/>
</dbReference>
<dbReference type="SMR" id="B8HXS5"/>
<dbReference type="STRING" id="395961.Cyan7425_0978"/>
<dbReference type="KEGG" id="cyn:Cyan7425_0978"/>
<dbReference type="eggNOG" id="COG1381">
    <property type="taxonomic scope" value="Bacteria"/>
</dbReference>
<dbReference type="HOGENOM" id="CLU_066632_0_0_3"/>
<dbReference type="OrthoDB" id="9797083at2"/>
<dbReference type="GO" id="GO:0043590">
    <property type="term" value="C:bacterial nucleoid"/>
    <property type="evidence" value="ECO:0007669"/>
    <property type="project" value="TreeGrafter"/>
</dbReference>
<dbReference type="GO" id="GO:0006310">
    <property type="term" value="P:DNA recombination"/>
    <property type="evidence" value="ECO:0007669"/>
    <property type="project" value="UniProtKB-UniRule"/>
</dbReference>
<dbReference type="GO" id="GO:0006302">
    <property type="term" value="P:double-strand break repair"/>
    <property type="evidence" value="ECO:0007669"/>
    <property type="project" value="TreeGrafter"/>
</dbReference>
<dbReference type="Gene3D" id="2.40.50.140">
    <property type="entry name" value="Nucleic acid-binding proteins"/>
    <property type="match status" value="1"/>
</dbReference>
<dbReference type="Gene3D" id="1.20.1440.120">
    <property type="entry name" value="Recombination protein O, C-terminal domain"/>
    <property type="match status" value="1"/>
</dbReference>
<dbReference type="HAMAP" id="MF_00201">
    <property type="entry name" value="RecO"/>
    <property type="match status" value="1"/>
</dbReference>
<dbReference type="InterPro" id="IPR037278">
    <property type="entry name" value="ARFGAP/RecO"/>
</dbReference>
<dbReference type="InterPro" id="IPR022572">
    <property type="entry name" value="DNA_rep/recomb_RecO_N"/>
</dbReference>
<dbReference type="InterPro" id="IPR012340">
    <property type="entry name" value="NA-bd_OB-fold"/>
</dbReference>
<dbReference type="InterPro" id="IPR003717">
    <property type="entry name" value="RecO"/>
</dbReference>
<dbReference type="InterPro" id="IPR042242">
    <property type="entry name" value="RecO_C"/>
</dbReference>
<dbReference type="NCBIfam" id="TIGR00613">
    <property type="entry name" value="reco"/>
    <property type="match status" value="1"/>
</dbReference>
<dbReference type="PANTHER" id="PTHR33991">
    <property type="entry name" value="DNA REPAIR PROTEIN RECO"/>
    <property type="match status" value="1"/>
</dbReference>
<dbReference type="PANTHER" id="PTHR33991:SF1">
    <property type="entry name" value="DNA REPAIR PROTEIN RECO"/>
    <property type="match status" value="1"/>
</dbReference>
<dbReference type="Pfam" id="PF02565">
    <property type="entry name" value="RecO_C"/>
    <property type="match status" value="1"/>
</dbReference>
<dbReference type="Pfam" id="PF11967">
    <property type="entry name" value="RecO_N"/>
    <property type="match status" value="1"/>
</dbReference>
<dbReference type="SUPFAM" id="SSF57863">
    <property type="entry name" value="ArfGap/RecO-like zinc finger"/>
    <property type="match status" value="1"/>
</dbReference>
<dbReference type="SUPFAM" id="SSF50249">
    <property type="entry name" value="Nucleic acid-binding proteins"/>
    <property type="match status" value="1"/>
</dbReference>
<organism>
    <name type="scientific">Cyanothece sp. (strain PCC 7425 / ATCC 29141)</name>
    <dbReference type="NCBI Taxonomy" id="395961"/>
    <lineage>
        <taxon>Bacteria</taxon>
        <taxon>Bacillati</taxon>
        <taxon>Cyanobacteriota</taxon>
        <taxon>Cyanophyceae</taxon>
        <taxon>Gomontiellales</taxon>
        <taxon>Cyanothecaceae</taxon>
        <taxon>Cyanothece</taxon>
    </lineage>
</organism>
<accession>B8HXS5</accession>
<sequence>MSSTYKATGINLKAMPLGESDRLLTILTREYGLIRVVAPGARKPRSSLGGRSGLFVVNELLIAPGRSLHKLSQAETLTSYARLSKHLSTLTASQYLAELVIYQALSEQPQVELFDLLCYYLSWLEQSPEQEVLAVLSRAVFHLLEWAGIAPQVQQCCLTRRPITPDYTDPDWRIGFSCRAGGTVTSLAEALSLPASELQSTPAVPSRSAPALEHPHVYLTAIELEVLQHLSTSLPSSPTVSWSDLPPPSHYPTWVWLAIERTLRQYIQSYLDRPIRSAVLMDACFSPLSPAFS</sequence>
<name>RECO_CYAP4</name>
<reference key="1">
    <citation type="journal article" date="2011" name="MBio">
        <title>Novel metabolic attributes of the genus Cyanothece, comprising a group of unicellular nitrogen-fixing Cyanobacteria.</title>
        <authorList>
            <person name="Bandyopadhyay A."/>
            <person name="Elvitigala T."/>
            <person name="Welsh E."/>
            <person name="Stockel J."/>
            <person name="Liberton M."/>
            <person name="Min H."/>
            <person name="Sherman L.A."/>
            <person name="Pakrasi H.B."/>
        </authorList>
    </citation>
    <scope>NUCLEOTIDE SEQUENCE [LARGE SCALE GENOMIC DNA]</scope>
    <source>
        <strain>PCC 7425 / ATCC 29141</strain>
    </source>
</reference>
<proteinExistence type="inferred from homology"/>